<feature type="chain" id="PRO_0000191690" description="Translocon-associated protein subunit gamma">
    <location>
        <begin position="1"/>
        <end position="185"/>
    </location>
</feature>
<feature type="topological domain" description="Lumenal" evidence="2">
    <location>
        <begin position="1"/>
        <end position="27"/>
    </location>
</feature>
<feature type="transmembrane region" description="Helical" evidence="2">
    <location>
        <begin position="28"/>
        <end position="48"/>
    </location>
</feature>
<feature type="topological domain" description="Cytoplasmic" evidence="2">
    <location>
        <begin position="49"/>
        <end position="54"/>
    </location>
</feature>
<feature type="transmembrane region" description="Helical" evidence="2">
    <location>
        <begin position="55"/>
        <end position="76"/>
    </location>
</feature>
<feature type="topological domain" description="Lumenal" evidence="2">
    <location>
        <begin position="77"/>
        <end position="135"/>
    </location>
</feature>
<feature type="transmembrane region" description="Helical" evidence="2">
    <location>
        <begin position="136"/>
        <end position="157"/>
    </location>
</feature>
<feature type="topological domain" description="Cytoplasmic" evidence="2">
    <location>
        <begin position="158"/>
        <end position="163"/>
    </location>
</feature>
<feature type="transmembrane region" description="Helical" evidence="2">
    <location>
        <begin position="164"/>
        <end position="184"/>
    </location>
</feature>
<feature type="modified residue" description="N-acetylmethionine" evidence="3">
    <location>
        <position position="1"/>
    </location>
</feature>
<feature type="modified residue" description="Phosphoserine" evidence="1">
    <location>
        <position position="7"/>
    </location>
</feature>
<feature type="modified residue" description="Phosphoserine" evidence="8 9 10 11">
    <location>
        <position position="11"/>
    </location>
</feature>
<feature type="modified residue" description="Phosphoserine" evidence="1">
    <location>
        <position position="105"/>
    </location>
</feature>
<feature type="splice variant" id="VSP_056195" description="In isoform 2." evidence="5">
    <original>R</original>
    <variation>RFDSCLKYGHHKRG</variation>
    <location>
        <position position="120"/>
    </location>
</feature>
<sequence length="185" mass="21080">MAPKGSSKQQSEEDLLLQDFSRNLSAKSSALFFGNAFIVSAIPIWLYWRIWHMDLIQSAVLYSVMTLVSTYLVAFAYKNVKFVLKHKVAQKREDAVSKEVTRKLSEADNRKMSRKEKDERILWKKNEVADYEATTFSIFYNNTLFLVVVIVASFFILKNFNPTVNYILSISASSGLIALLSTGSK</sequence>
<accession>Q9UNL2</accession>
<accession>B2R7D0</accession>
<accession>B4E2P2</accession>
<accession>D3DNK5</accession>
<accession>Q549M4</accession>
<gene>
    <name type="primary">SSR3</name>
    <name type="synonym">TRAPG</name>
</gene>
<organism>
    <name type="scientific">Homo sapiens</name>
    <name type="common">Human</name>
    <dbReference type="NCBI Taxonomy" id="9606"/>
    <lineage>
        <taxon>Eukaryota</taxon>
        <taxon>Metazoa</taxon>
        <taxon>Chordata</taxon>
        <taxon>Craniata</taxon>
        <taxon>Vertebrata</taxon>
        <taxon>Euteleostomi</taxon>
        <taxon>Mammalia</taxon>
        <taxon>Eutheria</taxon>
        <taxon>Euarchontoglires</taxon>
        <taxon>Primates</taxon>
        <taxon>Haplorrhini</taxon>
        <taxon>Catarrhini</taxon>
        <taxon>Hominidae</taxon>
        <taxon>Homo</taxon>
    </lineage>
</organism>
<protein>
    <recommendedName>
        <fullName>Translocon-associated protein subunit gamma</fullName>
        <shortName>TRAP-gamma</shortName>
    </recommendedName>
    <alternativeName>
        <fullName>Signal sequence receptor subunit gamma</fullName>
        <shortName>SSR-gamma</shortName>
    </alternativeName>
</protein>
<name>SSRG_HUMAN</name>
<comment type="function">
    <text>TRAP proteins are part of a complex whose function is to bind calcium to the ER membrane and thereby regulate the retention of ER resident proteins.</text>
</comment>
<comment type="subunit">
    <text evidence="4">Heterotetramer of TRAP-alpha, TRAP-beta, TRAP-delta and TRAP-gamma.</text>
</comment>
<comment type="interaction">
    <interactant intactId="EBI-1043938">
        <id>Q9UNL2</id>
    </interactant>
    <interactant intactId="EBI-712367">
        <id>Q9UI14</id>
        <label>RABAC1</label>
    </interactant>
    <organismsDiffer>false</organismsDiffer>
    <experiments>3</experiments>
</comment>
<comment type="subcellular location">
    <subcellularLocation>
        <location>Endoplasmic reticulum membrane</location>
        <topology>Multi-pass membrane protein</topology>
    </subcellularLocation>
</comment>
<comment type="alternative products">
    <event type="alternative splicing"/>
    <isoform>
        <id>Q9UNL2-1</id>
        <name>1</name>
        <sequence type="displayed"/>
    </isoform>
    <isoform>
        <id>Q9UNL2-2</id>
        <name>2</name>
        <sequence type="described" ref="VSP_056195"/>
    </isoform>
</comment>
<comment type="similarity">
    <text evidence="6">Belongs to the TRAP-gamma family.</text>
</comment>
<proteinExistence type="evidence at protein level"/>
<dbReference type="EMBL" id="AF087907">
    <property type="protein sequence ID" value="AAP97205.1"/>
    <property type="molecule type" value="mRNA"/>
</dbReference>
<dbReference type="EMBL" id="AF110647">
    <property type="protein sequence ID" value="AAD48587.1"/>
    <property type="molecule type" value="mRNA"/>
</dbReference>
<dbReference type="EMBL" id="BT006669">
    <property type="protein sequence ID" value="AAP35315.1"/>
    <property type="molecule type" value="mRNA"/>
</dbReference>
<dbReference type="EMBL" id="AK304364">
    <property type="protein sequence ID" value="BAG65204.1"/>
    <property type="molecule type" value="mRNA"/>
</dbReference>
<dbReference type="EMBL" id="AK312935">
    <property type="protein sequence ID" value="BAG35777.1"/>
    <property type="molecule type" value="mRNA"/>
</dbReference>
<dbReference type="EMBL" id="AC092927">
    <property type="status" value="NOT_ANNOTATED_CDS"/>
    <property type="molecule type" value="Genomic_DNA"/>
</dbReference>
<dbReference type="EMBL" id="CH471052">
    <property type="protein sequence ID" value="EAW78730.1"/>
    <property type="molecule type" value="Genomic_DNA"/>
</dbReference>
<dbReference type="EMBL" id="CH471052">
    <property type="protein sequence ID" value="EAW78731.1"/>
    <property type="molecule type" value="Genomic_DNA"/>
</dbReference>
<dbReference type="EMBL" id="BC017203">
    <property type="protein sequence ID" value="AAH17203.1"/>
    <property type="molecule type" value="mRNA"/>
</dbReference>
<dbReference type="CCDS" id="CCDS3176.1">
    <molecule id="Q9UNL2-1"/>
</dbReference>
<dbReference type="CCDS" id="CCDS77846.1">
    <molecule id="Q9UNL2-2"/>
</dbReference>
<dbReference type="RefSeq" id="NP_001295126.1">
    <molecule id="Q9UNL2-2"/>
    <property type="nucleotide sequence ID" value="NM_001308197.2"/>
</dbReference>
<dbReference type="RefSeq" id="NP_001295133.1">
    <property type="nucleotide sequence ID" value="NM_001308204.1"/>
</dbReference>
<dbReference type="RefSeq" id="NP_001295134.1">
    <property type="nucleotide sequence ID" value="NM_001308205.1"/>
</dbReference>
<dbReference type="RefSeq" id="NP_009038.1">
    <molecule id="Q9UNL2-1"/>
    <property type="nucleotide sequence ID" value="NM_007107.5"/>
</dbReference>
<dbReference type="PDB" id="8B6L">
    <property type="method" value="EM"/>
    <property type="resolution" value="7.60 A"/>
    <property type="chains" value="G=1-185"/>
</dbReference>
<dbReference type="PDBsum" id="8B6L"/>
<dbReference type="EMDB" id="EMD-15870"/>
<dbReference type="SMR" id="Q9UNL2"/>
<dbReference type="BioGRID" id="112625">
    <property type="interactions" value="175"/>
</dbReference>
<dbReference type="ComplexPortal" id="CPX-8024">
    <property type="entry name" value="Translocon-associated protein complex"/>
</dbReference>
<dbReference type="FunCoup" id="Q9UNL2">
    <property type="interactions" value="1763"/>
</dbReference>
<dbReference type="IntAct" id="Q9UNL2">
    <property type="interactions" value="77"/>
</dbReference>
<dbReference type="MINT" id="Q9UNL2"/>
<dbReference type="STRING" id="9606.ENSP00000420641"/>
<dbReference type="GlyGen" id="Q9UNL2">
    <property type="glycosylation" value="1 site, 1 O-linked glycan (1 site)"/>
</dbReference>
<dbReference type="iPTMnet" id="Q9UNL2"/>
<dbReference type="PhosphoSitePlus" id="Q9UNL2"/>
<dbReference type="SwissPalm" id="Q9UNL2"/>
<dbReference type="BioMuta" id="SSR3"/>
<dbReference type="DMDM" id="9087205"/>
<dbReference type="jPOST" id="Q9UNL2"/>
<dbReference type="MassIVE" id="Q9UNL2"/>
<dbReference type="PaxDb" id="9606-ENSP00000265044"/>
<dbReference type="PeptideAtlas" id="Q9UNL2"/>
<dbReference type="ProteomicsDB" id="5841"/>
<dbReference type="ProteomicsDB" id="85302">
    <molecule id="Q9UNL2-1"/>
</dbReference>
<dbReference type="Pumba" id="Q9UNL2"/>
<dbReference type="TopDownProteomics" id="Q9UNL2-1">
    <molecule id="Q9UNL2-1"/>
</dbReference>
<dbReference type="Antibodypedia" id="18400">
    <property type="antibodies" value="60 antibodies from 19 providers"/>
</dbReference>
<dbReference type="DNASU" id="6747"/>
<dbReference type="Ensembl" id="ENST00000265044.7">
    <molecule id="Q9UNL2-1"/>
    <property type="protein sequence ID" value="ENSP00000265044.2"/>
    <property type="gene ID" value="ENSG00000114850.7"/>
</dbReference>
<dbReference type="Ensembl" id="ENST00000467789.5">
    <molecule id="Q9UNL2-2"/>
    <property type="protein sequence ID" value="ENSP00000420641.1"/>
    <property type="gene ID" value="ENSG00000114850.7"/>
</dbReference>
<dbReference type="GeneID" id="6747"/>
<dbReference type="KEGG" id="hsa:6747"/>
<dbReference type="MANE-Select" id="ENST00000265044.7">
    <property type="protein sequence ID" value="ENSP00000265044.2"/>
    <property type="RefSeq nucleotide sequence ID" value="NM_007107.5"/>
    <property type="RefSeq protein sequence ID" value="NP_009038.1"/>
</dbReference>
<dbReference type="UCSC" id="uc003fau.3">
    <molecule id="Q9UNL2-1"/>
    <property type="organism name" value="human"/>
</dbReference>
<dbReference type="AGR" id="HGNC:11325"/>
<dbReference type="CTD" id="6747"/>
<dbReference type="DisGeNET" id="6747"/>
<dbReference type="GeneCards" id="SSR3"/>
<dbReference type="HGNC" id="HGNC:11325">
    <property type="gene designation" value="SSR3"/>
</dbReference>
<dbReference type="HPA" id="ENSG00000114850">
    <property type="expression patterns" value="Low tissue specificity"/>
</dbReference>
<dbReference type="MalaCards" id="SSR3"/>
<dbReference type="MIM" id="606213">
    <property type="type" value="gene"/>
</dbReference>
<dbReference type="neXtProt" id="NX_Q9UNL2"/>
<dbReference type="OpenTargets" id="ENSG00000114850"/>
<dbReference type="PharmGKB" id="PA36149"/>
<dbReference type="VEuPathDB" id="HostDB:ENSG00000114850"/>
<dbReference type="eggNOG" id="KOG4490">
    <property type="taxonomic scope" value="Eukaryota"/>
</dbReference>
<dbReference type="GeneTree" id="ENSGT00390000000970"/>
<dbReference type="HOGENOM" id="CLU_092935_0_0_1"/>
<dbReference type="InParanoid" id="Q9UNL2"/>
<dbReference type="OMA" id="PLWLFWR"/>
<dbReference type="OrthoDB" id="10059529at2759"/>
<dbReference type="PAN-GO" id="Q9UNL2">
    <property type="GO annotations" value="1 GO annotation based on evolutionary models"/>
</dbReference>
<dbReference type="PhylomeDB" id="Q9UNL2"/>
<dbReference type="TreeFam" id="TF314998"/>
<dbReference type="PathwayCommons" id="Q9UNL2"/>
<dbReference type="Reactome" id="R-HSA-1799339">
    <property type="pathway name" value="SRP-dependent cotranslational protein targeting to membrane"/>
</dbReference>
<dbReference type="SignaLink" id="Q9UNL2"/>
<dbReference type="BioGRID-ORCS" id="6747">
    <property type="hits" value="38 hits in 1151 CRISPR screens"/>
</dbReference>
<dbReference type="ChiTaRS" id="SSR3">
    <property type="organism name" value="human"/>
</dbReference>
<dbReference type="GenomeRNAi" id="6747"/>
<dbReference type="Pharos" id="Q9UNL2">
    <property type="development level" value="Tbio"/>
</dbReference>
<dbReference type="PRO" id="PR:Q9UNL2"/>
<dbReference type="Proteomes" id="UP000005640">
    <property type="component" value="Chromosome 3"/>
</dbReference>
<dbReference type="RNAct" id="Q9UNL2">
    <property type="molecule type" value="protein"/>
</dbReference>
<dbReference type="Bgee" id="ENSG00000114850">
    <property type="expression patterns" value="Expressed in body of pancreas and 192 other cell types or tissues"/>
</dbReference>
<dbReference type="ExpressionAtlas" id="Q9UNL2">
    <property type="expression patterns" value="baseline and differential"/>
</dbReference>
<dbReference type="GO" id="GO:0005783">
    <property type="term" value="C:endoplasmic reticulum"/>
    <property type="evidence" value="ECO:0000318"/>
    <property type="project" value="GO_Central"/>
</dbReference>
<dbReference type="GO" id="GO:0005789">
    <property type="term" value="C:endoplasmic reticulum membrane"/>
    <property type="evidence" value="ECO:0007669"/>
    <property type="project" value="UniProtKB-SubCell"/>
</dbReference>
<dbReference type="GO" id="GO:0006614">
    <property type="term" value="P:SRP-dependent cotranslational protein targeting to membrane"/>
    <property type="evidence" value="ECO:0007669"/>
    <property type="project" value="InterPro"/>
</dbReference>
<dbReference type="InterPro" id="IPR009779">
    <property type="entry name" value="SSR3"/>
</dbReference>
<dbReference type="PANTHER" id="PTHR13399:SF3">
    <property type="entry name" value="TRANSLOCON-ASSOCIATED PROTEIN SUBUNIT GAMMA"/>
    <property type="match status" value="1"/>
</dbReference>
<dbReference type="PANTHER" id="PTHR13399">
    <property type="entry name" value="TRANSLOCON-ASSOCIATED PROTEIN TRAP , GAMMA SUBUNIT"/>
    <property type="match status" value="1"/>
</dbReference>
<dbReference type="Pfam" id="PF07074">
    <property type="entry name" value="TRAP-gamma"/>
    <property type="match status" value="1"/>
</dbReference>
<keyword id="KW-0002">3D-structure</keyword>
<keyword id="KW-0007">Acetylation</keyword>
<keyword id="KW-0025">Alternative splicing</keyword>
<keyword id="KW-0256">Endoplasmic reticulum</keyword>
<keyword id="KW-0472">Membrane</keyword>
<keyword id="KW-0597">Phosphoprotein</keyword>
<keyword id="KW-1267">Proteomics identification</keyword>
<keyword id="KW-1185">Reference proteome</keyword>
<keyword id="KW-0812">Transmembrane</keyword>
<keyword id="KW-1133">Transmembrane helix</keyword>
<evidence type="ECO:0000250" key="1">
    <source>
        <dbReference type="UniProtKB" id="Q9DCF9"/>
    </source>
</evidence>
<evidence type="ECO:0000255" key="2"/>
<evidence type="ECO:0000269" key="3">
    <source>
    </source>
</evidence>
<evidence type="ECO:0000269" key="4">
    <source>
    </source>
</evidence>
<evidence type="ECO:0000303" key="5">
    <source>
    </source>
</evidence>
<evidence type="ECO:0000305" key="6"/>
<evidence type="ECO:0007744" key="7">
    <source>
        <dbReference type="PDB" id="8B6L"/>
    </source>
</evidence>
<evidence type="ECO:0007744" key="8">
    <source>
    </source>
</evidence>
<evidence type="ECO:0007744" key="9">
    <source>
    </source>
</evidence>
<evidence type="ECO:0007744" key="10">
    <source>
    </source>
</evidence>
<evidence type="ECO:0007744" key="11">
    <source>
    </source>
</evidence>
<reference key="1">
    <citation type="submission" date="1998-08" db="EMBL/GenBank/DDBJ databases">
        <title>Cloning and characterization of a novel human cDNA homolog to R.norvegicus TRAP-complex gamma subunit mRNA.</title>
        <authorList>
            <person name="Huang H.B."/>
            <person name="Yu L."/>
            <person name="Yang J."/>
            <person name="Zhang H.L."/>
            <person name="Yang Y.M."/>
            <person name="Zhao S.Y."/>
        </authorList>
    </citation>
    <scope>NUCLEOTIDE SEQUENCE [MRNA] (ISOFORM 1)</scope>
</reference>
<reference key="2">
    <citation type="submission" date="1998-12" db="EMBL/GenBank/DDBJ databases">
        <title>Human translocon-associated protein, gamma subunit gene.</title>
        <authorList>
            <person name="Song H."/>
            <person name="Peng Y."/>
            <person name="Dai M."/>
            <person name="Huang Q."/>
            <person name="Mao Y."/>
            <person name="Zhang Q."/>
            <person name="Mao M."/>
            <person name="Fu G."/>
            <person name="Luo M."/>
            <person name="Chen J."/>
            <person name="Hu R."/>
        </authorList>
    </citation>
    <scope>NUCLEOTIDE SEQUENCE [MRNA] (ISOFORM 1)</scope>
    <source>
        <tissue>Pituitary</tissue>
    </source>
</reference>
<reference key="3">
    <citation type="submission" date="2003-05" db="EMBL/GenBank/DDBJ databases">
        <title>Cloning of human full-length CDSs in BD Creator(TM) system donor vector.</title>
        <authorList>
            <person name="Kalnine N."/>
            <person name="Chen X."/>
            <person name="Rolfs A."/>
            <person name="Halleck A."/>
            <person name="Hines L."/>
            <person name="Eisenstein S."/>
            <person name="Koundinya M."/>
            <person name="Raphael J."/>
            <person name="Moreira D."/>
            <person name="Kelley T."/>
            <person name="LaBaer J."/>
            <person name="Lin Y."/>
            <person name="Phelan M."/>
            <person name="Farmer A."/>
        </authorList>
    </citation>
    <scope>NUCLEOTIDE SEQUENCE [LARGE SCALE MRNA] (ISOFORM 1)</scope>
</reference>
<reference key="4">
    <citation type="journal article" date="2004" name="Nat. Genet.">
        <title>Complete sequencing and characterization of 21,243 full-length human cDNAs.</title>
        <authorList>
            <person name="Ota T."/>
            <person name="Suzuki Y."/>
            <person name="Nishikawa T."/>
            <person name="Otsuki T."/>
            <person name="Sugiyama T."/>
            <person name="Irie R."/>
            <person name="Wakamatsu A."/>
            <person name="Hayashi K."/>
            <person name="Sato H."/>
            <person name="Nagai K."/>
            <person name="Kimura K."/>
            <person name="Makita H."/>
            <person name="Sekine M."/>
            <person name="Obayashi M."/>
            <person name="Nishi T."/>
            <person name="Shibahara T."/>
            <person name="Tanaka T."/>
            <person name="Ishii S."/>
            <person name="Yamamoto J."/>
            <person name="Saito K."/>
            <person name="Kawai Y."/>
            <person name="Isono Y."/>
            <person name="Nakamura Y."/>
            <person name="Nagahari K."/>
            <person name="Murakami K."/>
            <person name="Yasuda T."/>
            <person name="Iwayanagi T."/>
            <person name="Wagatsuma M."/>
            <person name="Shiratori A."/>
            <person name="Sudo H."/>
            <person name="Hosoiri T."/>
            <person name="Kaku Y."/>
            <person name="Kodaira H."/>
            <person name="Kondo H."/>
            <person name="Sugawara M."/>
            <person name="Takahashi M."/>
            <person name="Kanda K."/>
            <person name="Yokoi T."/>
            <person name="Furuya T."/>
            <person name="Kikkawa E."/>
            <person name="Omura Y."/>
            <person name="Abe K."/>
            <person name="Kamihara K."/>
            <person name="Katsuta N."/>
            <person name="Sato K."/>
            <person name="Tanikawa M."/>
            <person name="Yamazaki M."/>
            <person name="Ninomiya K."/>
            <person name="Ishibashi T."/>
            <person name="Yamashita H."/>
            <person name="Murakawa K."/>
            <person name="Fujimori K."/>
            <person name="Tanai H."/>
            <person name="Kimata M."/>
            <person name="Watanabe M."/>
            <person name="Hiraoka S."/>
            <person name="Chiba Y."/>
            <person name="Ishida S."/>
            <person name="Ono Y."/>
            <person name="Takiguchi S."/>
            <person name="Watanabe S."/>
            <person name="Yosida M."/>
            <person name="Hotuta T."/>
            <person name="Kusano J."/>
            <person name="Kanehori K."/>
            <person name="Takahashi-Fujii A."/>
            <person name="Hara H."/>
            <person name="Tanase T.-O."/>
            <person name="Nomura Y."/>
            <person name="Togiya S."/>
            <person name="Komai F."/>
            <person name="Hara R."/>
            <person name="Takeuchi K."/>
            <person name="Arita M."/>
            <person name="Imose N."/>
            <person name="Musashino K."/>
            <person name="Yuuki H."/>
            <person name="Oshima A."/>
            <person name="Sasaki N."/>
            <person name="Aotsuka S."/>
            <person name="Yoshikawa Y."/>
            <person name="Matsunawa H."/>
            <person name="Ichihara T."/>
            <person name="Shiohata N."/>
            <person name="Sano S."/>
            <person name="Moriya S."/>
            <person name="Momiyama H."/>
            <person name="Satoh N."/>
            <person name="Takami S."/>
            <person name="Terashima Y."/>
            <person name="Suzuki O."/>
            <person name="Nakagawa S."/>
            <person name="Senoh A."/>
            <person name="Mizoguchi H."/>
            <person name="Goto Y."/>
            <person name="Shimizu F."/>
            <person name="Wakebe H."/>
            <person name="Hishigaki H."/>
            <person name="Watanabe T."/>
            <person name="Sugiyama A."/>
            <person name="Takemoto M."/>
            <person name="Kawakami B."/>
            <person name="Yamazaki M."/>
            <person name="Watanabe K."/>
            <person name="Kumagai A."/>
            <person name="Itakura S."/>
            <person name="Fukuzumi Y."/>
            <person name="Fujimori Y."/>
            <person name="Komiyama M."/>
            <person name="Tashiro H."/>
            <person name="Tanigami A."/>
            <person name="Fujiwara T."/>
            <person name="Ono T."/>
            <person name="Yamada K."/>
            <person name="Fujii Y."/>
            <person name="Ozaki K."/>
            <person name="Hirao M."/>
            <person name="Ohmori Y."/>
            <person name="Kawabata A."/>
            <person name="Hikiji T."/>
            <person name="Kobatake N."/>
            <person name="Inagaki H."/>
            <person name="Ikema Y."/>
            <person name="Okamoto S."/>
            <person name="Okitani R."/>
            <person name="Kawakami T."/>
            <person name="Noguchi S."/>
            <person name="Itoh T."/>
            <person name="Shigeta K."/>
            <person name="Senba T."/>
            <person name="Matsumura K."/>
            <person name="Nakajima Y."/>
            <person name="Mizuno T."/>
            <person name="Morinaga M."/>
            <person name="Sasaki M."/>
            <person name="Togashi T."/>
            <person name="Oyama M."/>
            <person name="Hata H."/>
            <person name="Watanabe M."/>
            <person name="Komatsu T."/>
            <person name="Mizushima-Sugano J."/>
            <person name="Satoh T."/>
            <person name="Shirai Y."/>
            <person name="Takahashi Y."/>
            <person name="Nakagawa K."/>
            <person name="Okumura K."/>
            <person name="Nagase T."/>
            <person name="Nomura N."/>
            <person name="Kikuchi H."/>
            <person name="Masuho Y."/>
            <person name="Yamashita R."/>
            <person name="Nakai K."/>
            <person name="Yada T."/>
            <person name="Nakamura Y."/>
            <person name="Ohara O."/>
            <person name="Isogai T."/>
            <person name="Sugano S."/>
        </authorList>
    </citation>
    <scope>NUCLEOTIDE SEQUENCE [LARGE SCALE MRNA] (ISOFORMS 1 AND 2)</scope>
    <source>
        <tissue>Prostate</tissue>
        <tissue>Trachea</tissue>
    </source>
</reference>
<reference key="5">
    <citation type="journal article" date="2006" name="Nature">
        <title>The DNA sequence, annotation and analysis of human chromosome 3.</title>
        <authorList>
            <person name="Muzny D.M."/>
            <person name="Scherer S.E."/>
            <person name="Kaul R."/>
            <person name="Wang J."/>
            <person name="Yu J."/>
            <person name="Sudbrak R."/>
            <person name="Buhay C.J."/>
            <person name="Chen R."/>
            <person name="Cree A."/>
            <person name="Ding Y."/>
            <person name="Dugan-Rocha S."/>
            <person name="Gill R."/>
            <person name="Gunaratne P."/>
            <person name="Harris R.A."/>
            <person name="Hawes A.C."/>
            <person name="Hernandez J."/>
            <person name="Hodgson A.V."/>
            <person name="Hume J."/>
            <person name="Jackson A."/>
            <person name="Khan Z.M."/>
            <person name="Kovar-Smith C."/>
            <person name="Lewis L.R."/>
            <person name="Lozado R.J."/>
            <person name="Metzker M.L."/>
            <person name="Milosavljevic A."/>
            <person name="Miner G.R."/>
            <person name="Morgan M.B."/>
            <person name="Nazareth L.V."/>
            <person name="Scott G."/>
            <person name="Sodergren E."/>
            <person name="Song X.-Z."/>
            <person name="Steffen D."/>
            <person name="Wei S."/>
            <person name="Wheeler D.A."/>
            <person name="Wright M.W."/>
            <person name="Worley K.C."/>
            <person name="Yuan Y."/>
            <person name="Zhang Z."/>
            <person name="Adams C.Q."/>
            <person name="Ansari-Lari M.A."/>
            <person name="Ayele M."/>
            <person name="Brown M.J."/>
            <person name="Chen G."/>
            <person name="Chen Z."/>
            <person name="Clendenning J."/>
            <person name="Clerc-Blankenburg K.P."/>
            <person name="Chen R."/>
            <person name="Chen Z."/>
            <person name="Davis C."/>
            <person name="Delgado O."/>
            <person name="Dinh H.H."/>
            <person name="Dong W."/>
            <person name="Draper H."/>
            <person name="Ernst S."/>
            <person name="Fu G."/>
            <person name="Gonzalez-Garay M.L."/>
            <person name="Garcia D.K."/>
            <person name="Gillett W."/>
            <person name="Gu J."/>
            <person name="Hao B."/>
            <person name="Haugen E."/>
            <person name="Havlak P."/>
            <person name="He X."/>
            <person name="Hennig S."/>
            <person name="Hu S."/>
            <person name="Huang W."/>
            <person name="Jackson L.R."/>
            <person name="Jacob L.S."/>
            <person name="Kelly S.H."/>
            <person name="Kube M."/>
            <person name="Levy R."/>
            <person name="Li Z."/>
            <person name="Liu B."/>
            <person name="Liu J."/>
            <person name="Liu W."/>
            <person name="Lu J."/>
            <person name="Maheshwari M."/>
            <person name="Nguyen B.-V."/>
            <person name="Okwuonu G.O."/>
            <person name="Palmeiri A."/>
            <person name="Pasternak S."/>
            <person name="Perez L.M."/>
            <person name="Phelps K.A."/>
            <person name="Plopper F.J."/>
            <person name="Qiang B."/>
            <person name="Raymond C."/>
            <person name="Rodriguez R."/>
            <person name="Saenphimmachak C."/>
            <person name="Santibanez J."/>
            <person name="Shen H."/>
            <person name="Shen Y."/>
            <person name="Subramanian S."/>
            <person name="Tabor P.E."/>
            <person name="Verduzco D."/>
            <person name="Waldron L."/>
            <person name="Wang J."/>
            <person name="Wang J."/>
            <person name="Wang Q."/>
            <person name="Williams G.A."/>
            <person name="Wong G.K.-S."/>
            <person name="Yao Z."/>
            <person name="Zhang J."/>
            <person name="Zhang X."/>
            <person name="Zhao G."/>
            <person name="Zhou J."/>
            <person name="Zhou Y."/>
            <person name="Nelson D."/>
            <person name="Lehrach H."/>
            <person name="Reinhardt R."/>
            <person name="Naylor S.L."/>
            <person name="Yang H."/>
            <person name="Olson M."/>
            <person name="Weinstock G."/>
            <person name="Gibbs R.A."/>
        </authorList>
    </citation>
    <scope>NUCLEOTIDE SEQUENCE [LARGE SCALE GENOMIC DNA]</scope>
</reference>
<reference key="6">
    <citation type="submission" date="2005-09" db="EMBL/GenBank/DDBJ databases">
        <authorList>
            <person name="Mural R.J."/>
            <person name="Istrail S."/>
            <person name="Sutton G.G."/>
            <person name="Florea L."/>
            <person name="Halpern A.L."/>
            <person name="Mobarry C.M."/>
            <person name="Lippert R."/>
            <person name="Walenz B."/>
            <person name="Shatkay H."/>
            <person name="Dew I."/>
            <person name="Miller J.R."/>
            <person name="Flanigan M.J."/>
            <person name="Edwards N.J."/>
            <person name="Bolanos R."/>
            <person name="Fasulo D."/>
            <person name="Halldorsson B.V."/>
            <person name="Hannenhalli S."/>
            <person name="Turner R."/>
            <person name="Yooseph S."/>
            <person name="Lu F."/>
            <person name="Nusskern D.R."/>
            <person name="Shue B.C."/>
            <person name="Zheng X.H."/>
            <person name="Zhong F."/>
            <person name="Delcher A.L."/>
            <person name="Huson D.H."/>
            <person name="Kravitz S.A."/>
            <person name="Mouchard L."/>
            <person name="Reinert K."/>
            <person name="Remington K.A."/>
            <person name="Clark A.G."/>
            <person name="Waterman M.S."/>
            <person name="Eichler E.E."/>
            <person name="Adams M.D."/>
            <person name="Hunkapiller M.W."/>
            <person name="Myers E.W."/>
            <person name="Venter J.C."/>
        </authorList>
    </citation>
    <scope>NUCLEOTIDE SEQUENCE [LARGE SCALE GENOMIC DNA]</scope>
</reference>
<reference key="7">
    <citation type="journal article" date="2004" name="Genome Res.">
        <title>The status, quality, and expansion of the NIH full-length cDNA project: the Mammalian Gene Collection (MGC).</title>
        <authorList>
            <consortium name="The MGC Project Team"/>
        </authorList>
    </citation>
    <scope>NUCLEOTIDE SEQUENCE [LARGE SCALE MRNA] (ISOFORM 1)</scope>
    <source>
        <tissue>Skin</tissue>
    </source>
</reference>
<reference key="8">
    <citation type="journal article" date="2008" name="Mol. Cell">
        <title>Kinase-selective enrichment enables quantitative phosphoproteomics of the kinome across the cell cycle.</title>
        <authorList>
            <person name="Daub H."/>
            <person name="Olsen J.V."/>
            <person name="Bairlein M."/>
            <person name="Gnad F."/>
            <person name="Oppermann F.S."/>
            <person name="Korner R."/>
            <person name="Greff Z."/>
            <person name="Keri G."/>
            <person name="Stemmann O."/>
            <person name="Mann M."/>
        </authorList>
    </citation>
    <scope>PHOSPHORYLATION [LARGE SCALE ANALYSIS] AT SER-11</scope>
    <scope>IDENTIFICATION BY MASS SPECTROMETRY [LARGE SCALE ANALYSIS]</scope>
    <source>
        <tissue>Cervix carcinoma</tissue>
    </source>
</reference>
<reference key="9">
    <citation type="journal article" date="2008" name="Proc. Natl. Acad. Sci. U.S.A.">
        <title>A quantitative atlas of mitotic phosphorylation.</title>
        <authorList>
            <person name="Dephoure N."/>
            <person name="Zhou C."/>
            <person name="Villen J."/>
            <person name="Beausoleil S.A."/>
            <person name="Bakalarski C.E."/>
            <person name="Elledge S.J."/>
            <person name="Gygi S.P."/>
        </authorList>
    </citation>
    <scope>PHOSPHORYLATION [LARGE SCALE ANALYSIS] AT SER-11</scope>
    <scope>IDENTIFICATION BY MASS SPECTROMETRY [LARGE SCALE ANALYSIS]</scope>
    <source>
        <tissue>Cervix carcinoma</tissue>
    </source>
</reference>
<reference key="10">
    <citation type="journal article" date="2011" name="BMC Syst. Biol.">
        <title>Initial characterization of the human central proteome.</title>
        <authorList>
            <person name="Burkard T.R."/>
            <person name="Planyavsky M."/>
            <person name="Kaupe I."/>
            <person name="Breitwieser F.P."/>
            <person name="Buerckstuemmer T."/>
            <person name="Bennett K.L."/>
            <person name="Superti-Furga G."/>
            <person name="Colinge J."/>
        </authorList>
    </citation>
    <scope>IDENTIFICATION BY MASS SPECTROMETRY [LARGE SCALE ANALYSIS]</scope>
</reference>
<reference key="11">
    <citation type="journal article" date="2012" name="Proc. Natl. Acad. Sci. U.S.A.">
        <title>N-terminal acetylome analyses and functional insights of the N-terminal acetyltransferase NatB.</title>
        <authorList>
            <person name="Van Damme P."/>
            <person name="Lasa M."/>
            <person name="Polevoda B."/>
            <person name="Gazquez C."/>
            <person name="Elosegui-Artola A."/>
            <person name="Kim D.S."/>
            <person name="De Juan-Pardo E."/>
            <person name="Demeyer K."/>
            <person name="Hole K."/>
            <person name="Larrea E."/>
            <person name="Timmerman E."/>
            <person name="Prieto J."/>
            <person name="Arnesen T."/>
            <person name="Sherman F."/>
            <person name="Gevaert K."/>
            <person name="Aldabe R."/>
        </authorList>
    </citation>
    <scope>IDENTIFICATION BY MASS SPECTROMETRY [LARGE SCALE ANALYSIS]</scope>
</reference>
<reference key="12">
    <citation type="journal article" date="2013" name="J. Proteome Res.">
        <title>Toward a comprehensive characterization of a human cancer cell phosphoproteome.</title>
        <authorList>
            <person name="Zhou H."/>
            <person name="Di Palma S."/>
            <person name="Preisinger C."/>
            <person name="Peng M."/>
            <person name="Polat A.N."/>
            <person name="Heck A.J."/>
            <person name="Mohammed S."/>
        </authorList>
    </citation>
    <scope>PHOSPHORYLATION [LARGE SCALE ANALYSIS] AT SER-11</scope>
    <scope>IDENTIFICATION BY MASS SPECTROMETRY [LARGE SCALE ANALYSIS]</scope>
    <source>
        <tissue>Cervix carcinoma</tissue>
        <tissue>Erythroleukemia</tissue>
    </source>
</reference>
<reference key="13">
    <citation type="journal article" date="2014" name="J. Proteomics">
        <title>An enzyme assisted RP-RPLC approach for in-depth analysis of human liver phosphoproteome.</title>
        <authorList>
            <person name="Bian Y."/>
            <person name="Song C."/>
            <person name="Cheng K."/>
            <person name="Dong M."/>
            <person name="Wang F."/>
            <person name="Huang J."/>
            <person name="Sun D."/>
            <person name="Wang L."/>
            <person name="Ye M."/>
            <person name="Zou H."/>
        </authorList>
    </citation>
    <scope>PHOSPHORYLATION [LARGE SCALE ANALYSIS] AT SER-11</scope>
    <scope>IDENTIFICATION BY MASS SPECTROMETRY [LARGE SCALE ANALYSIS]</scope>
    <source>
        <tissue>Liver</tissue>
    </source>
</reference>
<reference key="14">
    <citation type="journal article" date="2015" name="Cell Rep.">
        <title>An organellar nalpha-acetyltransferase, naa60, acetylates cytosolic N termini of transmembrane proteins and maintains Golgi integrity.</title>
        <authorList>
            <person name="Aksnes H."/>
            <person name="Van Damme P."/>
            <person name="Goris M."/>
            <person name="Starheim K.K."/>
            <person name="Marie M."/>
            <person name="Stoeve S.I."/>
            <person name="Hoel C."/>
            <person name="Kalvik T.V."/>
            <person name="Hole K."/>
            <person name="Glomnes N."/>
            <person name="Furnes C."/>
            <person name="Ljostveit S."/>
            <person name="Ziegler M."/>
            <person name="Niere M."/>
            <person name="Gevaert K."/>
            <person name="Arnesen T."/>
        </authorList>
    </citation>
    <scope>ACETYLATION AT MET-1</scope>
</reference>
<reference key="15">
    <citation type="journal article" date="2015" name="Proteomics">
        <title>N-terminome analysis of the human mitochondrial proteome.</title>
        <authorList>
            <person name="Vaca Jacome A.S."/>
            <person name="Rabilloud T."/>
            <person name="Schaeffer-Reiss C."/>
            <person name="Rompais M."/>
            <person name="Ayoub D."/>
            <person name="Lane L."/>
            <person name="Bairoch A."/>
            <person name="Van Dorsselaer A."/>
            <person name="Carapito C."/>
        </authorList>
    </citation>
    <scope>IDENTIFICATION BY MASS SPECTROMETRY [LARGE SCALE ANALYSIS]</scope>
</reference>
<reference evidence="7" key="16">
    <citation type="journal article" date="2023" name="Nature">
        <title>Visualization of translation and protein biogenesis at the ER membrane.</title>
        <authorList>
            <person name="Gemmer M."/>
            <person name="Chaillet M.L."/>
            <person name="van Loenhout J."/>
            <person name="Cuevas Arenas R."/>
            <person name="Vismpas D."/>
            <person name="Grollers-Mulderij M."/>
            <person name="Koh F.A."/>
            <person name="Albanese P."/>
            <person name="Scheltema R.A."/>
            <person name="Howes S.C."/>
            <person name="Kotecha A."/>
            <person name="Fedry J."/>
            <person name="Forster F."/>
        </authorList>
    </citation>
    <scope>STRUCTURE BY ELECTRON MICROSCOPY (7.60 ANGSTROMS) OF THE STT3A-CONTAINING OLIGOSACCHARYLTRANSFERASE (OST) AND TRANSLOCON COMPLEXES</scope>
    <scope>SUBUNIT</scope>
</reference>